<comment type="function">
    <text evidence="2 3">Inhibits protein translation in cell-free systems (PubMed:2226781). May inhibit trypsin (By similarity).</text>
</comment>
<comment type="similarity">
    <text evidence="4">Belongs to the DEFL family.</text>
</comment>
<comment type="caution">
    <text evidence="5">Was initially thought to be a thionin.</text>
</comment>
<protein>
    <recommendedName>
        <fullName>Defensin-like protein 2</fullName>
    </recommendedName>
    <alternativeName>
        <fullName>Gamma-2-purothionin</fullName>
    </alternativeName>
</protein>
<feature type="chain" id="PRO_0000074262" description="Defensin-like protein 2">
    <location>
        <begin position="1"/>
        <end position="47"/>
    </location>
</feature>
<feature type="site" description="Interaction with trypsin" evidence="2">
    <location>
        <position position="11"/>
    </location>
</feature>
<feature type="disulfide bond" evidence="1">
    <location>
        <begin position="3"/>
        <end position="47"/>
    </location>
</feature>
<feature type="disulfide bond" evidence="1">
    <location>
        <begin position="14"/>
        <end position="34"/>
    </location>
</feature>
<feature type="disulfide bond" evidence="1">
    <location>
        <begin position="20"/>
        <end position="41"/>
    </location>
</feature>
<feature type="disulfide bond" evidence="1">
    <location>
        <begin position="24"/>
        <end position="43"/>
    </location>
</feature>
<proteinExistence type="evidence at protein level"/>
<keyword id="KW-0929">Antimicrobial</keyword>
<keyword id="KW-0903">Direct protein sequencing</keyword>
<keyword id="KW-1015">Disulfide bond</keyword>
<keyword id="KW-0295">Fungicide</keyword>
<keyword id="KW-0611">Plant defense</keyword>
<keyword id="KW-1185">Reference proteome</keyword>
<organism>
    <name type="scientific">Triticum aestivum</name>
    <name type="common">Wheat</name>
    <dbReference type="NCBI Taxonomy" id="4565"/>
    <lineage>
        <taxon>Eukaryota</taxon>
        <taxon>Viridiplantae</taxon>
        <taxon>Streptophyta</taxon>
        <taxon>Embryophyta</taxon>
        <taxon>Tracheophyta</taxon>
        <taxon>Spermatophyta</taxon>
        <taxon>Magnoliopsida</taxon>
        <taxon>Liliopsida</taxon>
        <taxon>Poales</taxon>
        <taxon>Poaceae</taxon>
        <taxon>BOP clade</taxon>
        <taxon>Pooideae</taxon>
        <taxon>Triticodae</taxon>
        <taxon>Triticeae</taxon>
        <taxon>Triticinae</taxon>
        <taxon>Triticum</taxon>
    </lineage>
</organism>
<reference key="1">
    <citation type="journal article" date="1990" name="FEBS Lett.">
        <title>Gamma-purothionins: amino acid sequence of two polypeptides of a new family of thionins from wheat endosperm.</title>
        <authorList>
            <person name="Colilla F.J."/>
            <person name="Rocher A."/>
            <person name="Mendez E."/>
        </authorList>
    </citation>
    <scope>PROTEIN SEQUENCE</scope>
    <scope>FUNCTION</scope>
    <source>
        <strain>cv. Senatore Capelli</strain>
        <tissue>Endosperm</tissue>
    </source>
</reference>
<evidence type="ECO:0000250" key="1">
    <source>
        <dbReference type="UniProtKB" id="P21925"/>
    </source>
</evidence>
<evidence type="ECO:0000250" key="2">
    <source>
        <dbReference type="UniProtKB" id="P83399"/>
    </source>
</evidence>
<evidence type="ECO:0000269" key="3">
    <source>
    </source>
</evidence>
<evidence type="ECO:0000305" key="4"/>
<evidence type="ECO:0000305" key="5">
    <source>
    </source>
</evidence>
<sequence length="47" mass="5151">KVCRQRSAGFKGPCVSDKNCAQVCLQEGWGGGNCDGPFRRCKCIRQC</sequence>
<accession>P20159</accession>
<dbReference type="SMR" id="P20159"/>
<dbReference type="TCDB" id="1.C.45.1.3">
    <property type="family name" value="the plant defensin (plant defensin) family"/>
</dbReference>
<dbReference type="Proteomes" id="UP000019116">
    <property type="component" value="Unplaced"/>
</dbReference>
<dbReference type="ExpressionAtlas" id="P20159">
    <property type="expression patterns" value="baseline and differential"/>
</dbReference>
<dbReference type="GO" id="GO:0006952">
    <property type="term" value="P:defense response"/>
    <property type="evidence" value="ECO:0000318"/>
    <property type="project" value="GO_Central"/>
</dbReference>
<dbReference type="GO" id="GO:0050832">
    <property type="term" value="P:defense response to fungus"/>
    <property type="evidence" value="ECO:0007669"/>
    <property type="project" value="UniProtKB-KW"/>
</dbReference>
<dbReference type="GO" id="GO:0031640">
    <property type="term" value="P:killing of cells of another organism"/>
    <property type="evidence" value="ECO:0007669"/>
    <property type="project" value="UniProtKB-KW"/>
</dbReference>
<dbReference type="CDD" id="cd00107">
    <property type="entry name" value="Knot1"/>
    <property type="match status" value="1"/>
</dbReference>
<dbReference type="Gene3D" id="3.30.30.10">
    <property type="entry name" value="Knottin, scorpion toxin-like"/>
    <property type="match status" value="1"/>
</dbReference>
<dbReference type="InterPro" id="IPR008176">
    <property type="entry name" value="Defensin_plant"/>
</dbReference>
<dbReference type="InterPro" id="IPR003614">
    <property type="entry name" value="Scorpion_toxin-like"/>
</dbReference>
<dbReference type="InterPro" id="IPR036574">
    <property type="entry name" value="Scorpion_toxin-like_sf"/>
</dbReference>
<dbReference type="Pfam" id="PF00304">
    <property type="entry name" value="Gamma-thionin"/>
    <property type="match status" value="1"/>
</dbReference>
<dbReference type="PRINTS" id="PR00288">
    <property type="entry name" value="PUROTHIONIN"/>
</dbReference>
<dbReference type="SMART" id="SM00505">
    <property type="entry name" value="Knot1"/>
    <property type="match status" value="1"/>
</dbReference>
<dbReference type="SUPFAM" id="SSF57095">
    <property type="entry name" value="Scorpion toxin-like"/>
    <property type="match status" value="1"/>
</dbReference>
<dbReference type="PROSITE" id="PS00940">
    <property type="entry name" value="GAMMA_THIONIN"/>
    <property type="match status" value="1"/>
</dbReference>
<name>DEF2_WHEAT</name>